<dbReference type="EMBL" id="AB018527">
    <property type="protein sequence ID" value="BAA84938.1"/>
    <property type="molecule type" value="mRNA"/>
</dbReference>
<dbReference type="SMR" id="Q9U903"/>
<dbReference type="GO" id="GO:0000785">
    <property type="term" value="C:chromatin"/>
    <property type="evidence" value="ECO:0007669"/>
    <property type="project" value="TreeGrafter"/>
</dbReference>
<dbReference type="GO" id="GO:0005634">
    <property type="term" value="C:nucleus"/>
    <property type="evidence" value="ECO:0007669"/>
    <property type="project" value="UniProtKB-SubCell"/>
</dbReference>
<dbReference type="GO" id="GO:0000981">
    <property type="term" value="F:DNA-binding transcription factor activity, RNA polymerase II-specific"/>
    <property type="evidence" value="ECO:0007669"/>
    <property type="project" value="TreeGrafter"/>
</dbReference>
<dbReference type="GO" id="GO:0000978">
    <property type="term" value="F:RNA polymerase II cis-regulatory region sequence-specific DNA binding"/>
    <property type="evidence" value="ECO:0007669"/>
    <property type="project" value="InterPro"/>
</dbReference>
<dbReference type="GO" id="GO:0001708">
    <property type="term" value="P:cell fate specification"/>
    <property type="evidence" value="ECO:0007669"/>
    <property type="project" value="TreeGrafter"/>
</dbReference>
<dbReference type="GO" id="GO:0003007">
    <property type="term" value="P:heart morphogenesis"/>
    <property type="evidence" value="ECO:0007669"/>
    <property type="project" value="TreeGrafter"/>
</dbReference>
<dbReference type="GO" id="GO:0001707">
    <property type="term" value="P:mesoderm formation"/>
    <property type="evidence" value="ECO:0007669"/>
    <property type="project" value="TreeGrafter"/>
</dbReference>
<dbReference type="GO" id="GO:0045893">
    <property type="term" value="P:positive regulation of DNA-templated transcription"/>
    <property type="evidence" value="ECO:0007669"/>
    <property type="project" value="InterPro"/>
</dbReference>
<dbReference type="CDD" id="cd20192">
    <property type="entry name" value="T-box_TBXT_TBX19-like"/>
    <property type="match status" value="1"/>
</dbReference>
<dbReference type="FunFam" id="2.60.40.820:FF:000002">
    <property type="entry name" value="T-box transcription factor Brachyury"/>
    <property type="match status" value="1"/>
</dbReference>
<dbReference type="Gene3D" id="2.60.40.820">
    <property type="entry name" value="Transcription factor, T-box"/>
    <property type="match status" value="1"/>
</dbReference>
<dbReference type="InterPro" id="IPR008967">
    <property type="entry name" value="p53-like_TF_DNA-bd_sf"/>
</dbReference>
<dbReference type="InterPro" id="IPR046360">
    <property type="entry name" value="T-box_DNA-bd"/>
</dbReference>
<dbReference type="InterPro" id="IPR036960">
    <property type="entry name" value="T-box_sf"/>
</dbReference>
<dbReference type="InterPro" id="IPR002070">
    <property type="entry name" value="TF_Brachyury"/>
</dbReference>
<dbReference type="InterPro" id="IPR001699">
    <property type="entry name" value="TF_T-box"/>
</dbReference>
<dbReference type="InterPro" id="IPR018186">
    <property type="entry name" value="TF_T-box_CS"/>
</dbReference>
<dbReference type="PANTHER" id="PTHR11267">
    <property type="entry name" value="T-BOX PROTEIN-RELATED"/>
    <property type="match status" value="1"/>
</dbReference>
<dbReference type="PANTHER" id="PTHR11267:SF106">
    <property type="entry name" value="T-RELATED PROTEIN"/>
    <property type="match status" value="1"/>
</dbReference>
<dbReference type="Pfam" id="PF00907">
    <property type="entry name" value="T-box"/>
    <property type="match status" value="1"/>
</dbReference>
<dbReference type="PRINTS" id="PR00938">
    <property type="entry name" value="BRACHYURY"/>
</dbReference>
<dbReference type="PRINTS" id="PR00937">
    <property type="entry name" value="TBOX"/>
</dbReference>
<dbReference type="SMART" id="SM00425">
    <property type="entry name" value="TBOX"/>
    <property type="match status" value="1"/>
</dbReference>
<dbReference type="SUPFAM" id="SSF49417">
    <property type="entry name" value="p53-like transcription factors"/>
    <property type="match status" value="1"/>
</dbReference>
<dbReference type="PROSITE" id="PS01283">
    <property type="entry name" value="TBOX_1"/>
    <property type="match status" value="1"/>
</dbReference>
<dbReference type="PROSITE" id="PS01264">
    <property type="entry name" value="TBOX_2"/>
    <property type="match status" value="1"/>
</dbReference>
<dbReference type="PROSITE" id="PS50252">
    <property type="entry name" value="TBOX_3"/>
    <property type="match status" value="1"/>
</dbReference>
<reference evidence="7 9" key="1">
    <citation type="journal article" date="1999" name="Mech. Dev.">
        <title>Pattern of Brachyury gene expression in starfish embryos resembles that of hemichordate embryos but not of sea urchin embryos.</title>
        <authorList>
            <person name="Shoguchi E."/>
            <person name="Satoh N."/>
            <person name="Maruyama Y.K."/>
        </authorList>
    </citation>
    <scope>NUCLEOTIDE SEQUENCE [MRNA]</scope>
    <scope>DEVELOPMENTAL STAGE</scope>
    <source>
        <tissue evidence="4">Gastrula</tissue>
    </source>
</reference>
<reference evidence="7" key="2">
    <citation type="journal article" date="2000" name="Dev. Growth Differ.">
        <title>A starfish homolog of mouse T-brain-1 is expressed in the archenteron of Asterina pectinifera embryos: possible involvement of two T-box genes in starfish gastrulation.</title>
        <authorList>
            <person name="Shoguchi E."/>
            <person name="Satoh N."/>
            <person name="Maruyama Y.K."/>
        </authorList>
    </citation>
    <scope>FUNCTION</scope>
</reference>
<name>TBXT_PATPE</name>
<comment type="function">
    <text evidence="5 8">May be involved in the transcriptional regulation of genes required for gastrulation.</text>
</comment>
<comment type="subcellular location">
    <subcellularLocation>
        <location evidence="2 7">Nucleus</location>
    </subcellularLocation>
</comment>
<comment type="developmental stage">
    <text evidence="4">First detected 17 hours after insemination at the vegetal pole in late blastula. In 20 hour gastrula, expressed around the base of the archenteron and the lateral embryonic wall but not in the invaginated cells of the archenteron. In 34 hour gastrula expression persists around the base of the archenteron or at the blastopore but is not detected in either mesenchyme cells or the archenteron. In mouth forming embryos and in early bipinnaria larvae expressed in cells around the blastopore and anus. Not detected in cells of the mesenchyme and coelomic vesicles derived from the archenteron.</text>
</comment>
<keyword id="KW-0217">Developmental protein</keyword>
<keyword id="KW-0238">DNA-binding</keyword>
<keyword id="KW-0539">Nucleus</keyword>
<keyword id="KW-0804">Transcription</keyword>
<keyword id="KW-0805">Transcription regulation</keyword>
<accession>Q9U903</accession>
<gene>
    <name evidence="1" type="primary">TBXT</name>
    <name evidence="9" type="synonym">Bra</name>
</gene>
<organism>
    <name type="scientific">Patiria pectinifera</name>
    <name type="common">Starfish</name>
    <name type="synonym">Asterina pectinifera</name>
    <dbReference type="NCBI Taxonomy" id="7594"/>
    <lineage>
        <taxon>Eukaryota</taxon>
        <taxon>Metazoa</taxon>
        <taxon>Echinodermata</taxon>
        <taxon>Eleutherozoa</taxon>
        <taxon>Asterozoa</taxon>
        <taxon>Asteroidea</taxon>
        <taxon>Valvatacea</taxon>
        <taxon>Valvatida</taxon>
        <taxon>Asterinidae</taxon>
        <taxon>Patiria</taxon>
    </lineage>
</organism>
<protein>
    <recommendedName>
        <fullName evidence="7">T-box transcription factor T homolog</fullName>
    </recommendedName>
    <alternativeName>
        <fullName evidence="9">ApBra</fullName>
    </alternativeName>
    <alternativeName>
        <fullName evidence="6">Brachyury protein homolog</fullName>
    </alternativeName>
</protein>
<sequence length="453" mass="49376">MSADTMRAPTYNVAHLLSAVQSEMTRGSEKGDPSEKGLKVTLEDRDLWRRFSKLTNEMIVTKTGRRMFPVLSASVTGLNPNAMYSILLDFTPADEHRWKYVNGEWVPGGKPDSPPPSTAYIHPDSPNFGAHWMKQCVSFSKVKLSNKLNGTGQIMLNSLHKYEPRIHVIRVGGPEKQRLIRSFSFPETQFIAVTAYQNEDITQLKIKYNPFAKAFLDIKEKGEHEFEDCHDHQQPRYPQLGSWFLPSAGTLCPPSPHHQFPPSLGMPSPVSHSCAVERYGSLRSHRSTPYPPPPYEQKYSPTSAYATDSTASSLSLLPAHEAWSPLGSSTHHTSNITTSPSHQYGGVWPPVTSSAVQPASSCGVGSPVHTSLLRAAYSNYSQPSTSSITGVPRPPAGSMSSSCAGYQNYNSPSEIHGGLNSTDAIGSYPTVGNQLCPGKVGAWSPLTPPSPGV</sequence>
<proteinExistence type="evidence at transcript level"/>
<evidence type="ECO:0000250" key="1">
    <source>
        <dbReference type="UniProtKB" id="O15178"/>
    </source>
</evidence>
<evidence type="ECO:0000255" key="2">
    <source>
        <dbReference type="PROSITE-ProRule" id="PRU00201"/>
    </source>
</evidence>
<evidence type="ECO:0000256" key="3">
    <source>
        <dbReference type="SAM" id="MobiDB-lite"/>
    </source>
</evidence>
<evidence type="ECO:0000269" key="4">
    <source>
    </source>
</evidence>
<evidence type="ECO:0000269" key="5">
    <source>
    </source>
</evidence>
<evidence type="ECO:0000303" key="6">
    <source>
    </source>
</evidence>
<evidence type="ECO:0000305" key="7"/>
<evidence type="ECO:0000305" key="8">
    <source>
    </source>
</evidence>
<evidence type="ECO:0000312" key="9">
    <source>
        <dbReference type="EMBL" id="BAA84938.1"/>
    </source>
</evidence>
<feature type="chain" id="PRO_0000420238" description="T-box transcription factor T homolog">
    <location>
        <begin position="1"/>
        <end position="453"/>
    </location>
</feature>
<feature type="DNA-binding region" description="T-box" evidence="2">
    <location>
        <begin position="47"/>
        <end position="217"/>
    </location>
</feature>
<feature type="region of interest" description="Disordered" evidence="3">
    <location>
        <begin position="283"/>
        <end position="304"/>
    </location>
</feature>